<reference key="1">
    <citation type="journal article" date="1997" name="Science">
        <title>Nonsyndromic deafness DFNA1 associated with mutation of a human homolog of the Drosophila gene diaphanous.</title>
        <authorList>
            <person name="Lynch E.D."/>
            <person name="Lee M.K."/>
            <person name="Morrow J.E."/>
            <person name="Welcsh P.L."/>
            <person name="Leon P.E."/>
            <person name="King M.-C."/>
        </authorList>
    </citation>
    <scope>NUCLEOTIDE SEQUENCE [MRNA] (ISOFORM 2)</scope>
    <scope>INVOLVEMENT IN DFNA1</scope>
</reference>
<reference key="2">
    <citation type="submission" date="2005-03" db="EMBL/GenBank/DDBJ databases">
        <authorList>
            <person name="Totoki Y."/>
            <person name="Toyoda A."/>
            <person name="Takeda T."/>
            <person name="Sakaki Y."/>
            <person name="Tanaka A."/>
            <person name="Yokoyama S."/>
            <person name="Ohara O."/>
            <person name="Nagase T."/>
            <person name="Kikuno R.F."/>
        </authorList>
    </citation>
    <scope>NUCLEOTIDE SEQUENCE [LARGE SCALE MRNA] (ISOFORM 2)</scope>
    <source>
        <tissue>Brain</tissue>
    </source>
</reference>
<reference key="3">
    <citation type="journal article" date="2004" name="Nature">
        <title>The DNA sequence and comparative analysis of human chromosome 5.</title>
        <authorList>
            <person name="Schmutz J."/>
            <person name="Martin J."/>
            <person name="Terry A."/>
            <person name="Couronne O."/>
            <person name="Grimwood J."/>
            <person name="Lowry S."/>
            <person name="Gordon L.A."/>
            <person name="Scott D."/>
            <person name="Xie G."/>
            <person name="Huang W."/>
            <person name="Hellsten U."/>
            <person name="Tran-Gyamfi M."/>
            <person name="She X."/>
            <person name="Prabhakar S."/>
            <person name="Aerts A."/>
            <person name="Altherr M."/>
            <person name="Bajorek E."/>
            <person name="Black S."/>
            <person name="Branscomb E."/>
            <person name="Caoile C."/>
            <person name="Challacombe J.F."/>
            <person name="Chan Y.M."/>
            <person name="Denys M."/>
            <person name="Detter J.C."/>
            <person name="Escobar J."/>
            <person name="Flowers D."/>
            <person name="Fotopulos D."/>
            <person name="Glavina T."/>
            <person name="Gomez M."/>
            <person name="Gonzales E."/>
            <person name="Goodstein D."/>
            <person name="Grigoriev I."/>
            <person name="Groza M."/>
            <person name="Hammon N."/>
            <person name="Hawkins T."/>
            <person name="Haydu L."/>
            <person name="Israni S."/>
            <person name="Jett J."/>
            <person name="Kadner K."/>
            <person name="Kimball H."/>
            <person name="Kobayashi A."/>
            <person name="Lopez F."/>
            <person name="Lou Y."/>
            <person name="Martinez D."/>
            <person name="Medina C."/>
            <person name="Morgan J."/>
            <person name="Nandkeshwar R."/>
            <person name="Noonan J.P."/>
            <person name="Pitluck S."/>
            <person name="Pollard M."/>
            <person name="Predki P."/>
            <person name="Priest J."/>
            <person name="Ramirez L."/>
            <person name="Retterer J."/>
            <person name="Rodriguez A."/>
            <person name="Rogers S."/>
            <person name="Salamov A."/>
            <person name="Salazar A."/>
            <person name="Thayer N."/>
            <person name="Tice H."/>
            <person name="Tsai M."/>
            <person name="Ustaszewska A."/>
            <person name="Vo N."/>
            <person name="Wheeler J."/>
            <person name="Wu K."/>
            <person name="Yang J."/>
            <person name="Dickson M."/>
            <person name="Cheng J.-F."/>
            <person name="Eichler E.E."/>
            <person name="Olsen A."/>
            <person name="Pennacchio L.A."/>
            <person name="Rokhsar D.S."/>
            <person name="Richardson P."/>
            <person name="Lucas S.M."/>
            <person name="Myers R.M."/>
            <person name="Rubin E.M."/>
        </authorList>
    </citation>
    <scope>NUCLEOTIDE SEQUENCE [LARGE SCALE GENOMIC DNA]</scope>
</reference>
<reference key="4">
    <citation type="journal article" date="2004" name="Genome Res.">
        <title>The status, quality, and expansion of the NIH full-length cDNA project: the Mammalian Gene Collection (MGC).</title>
        <authorList>
            <consortium name="The MGC Project Team"/>
        </authorList>
    </citation>
    <scope>NUCLEOTIDE SEQUENCE [LARGE SCALE MRNA] (ISOFORMS 1 AND 3)</scope>
    <source>
        <tissue>Heart</tissue>
        <tissue>Lung</tissue>
    </source>
</reference>
<reference key="5">
    <citation type="journal article" date="2004" name="Nat. Genet.">
        <title>Complete sequencing and characterization of 21,243 full-length human cDNAs.</title>
        <authorList>
            <person name="Ota T."/>
            <person name="Suzuki Y."/>
            <person name="Nishikawa T."/>
            <person name="Otsuki T."/>
            <person name="Sugiyama T."/>
            <person name="Irie R."/>
            <person name="Wakamatsu A."/>
            <person name="Hayashi K."/>
            <person name="Sato H."/>
            <person name="Nagai K."/>
            <person name="Kimura K."/>
            <person name="Makita H."/>
            <person name="Sekine M."/>
            <person name="Obayashi M."/>
            <person name="Nishi T."/>
            <person name="Shibahara T."/>
            <person name="Tanaka T."/>
            <person name="Ishii S."/>
            <person name="Yamamoto J."/>
            <person name="Saito K."/>
            <person name="Kawai Y."/>
            <person name="Isono Y."/>
            <person name="Nakamura Y."/>
            <person name="Nagahari K."/>
            <person name="Murakami K."/>
            <person name="Yasuda T."/>
            <person name="Iwayanagi T."/>
            <person name="Wagatsuma M."/>
            <person name="Shiratori A."/>
            <person name="Sudo H."/>
            <person name="Hosoiri T."/>
            <person name="Kaku Y."/>
            <person name="Kodaira H."/>
            <person name="Kondo H."/>
            <person name="Sugawara M."/>
            <person name="Takahashi M."/>
            <person name="Kanda K."/>
            <person name="Yokoi T."/>
            <person name="Furuya T."/>
            <person name="Kikkawa E."/>
            <person name="Omura Y."/>
            <person name="Abe K."/>
            <person name="Kamihara K."/>
            <person name="Katsuta N."/>
            <person name="Sato K."/>
            <person name="Tanikawa M."/>
            <person name="Yamazaki M."/>
            <person name="Ninomiya K."/>
            <person name="Ishibashi T."/>
            <person name="Yamashita H."/>
            <person name="Murakawa K."/>
            <person name="Fujimori K."/>
            <person name="Tanai H."/>
            <person name="Kimata M."/>
            <person name="Watanabe M."/>
            <person name="Hiraoka S."/>
            <person name="Chiba Y."/>
            <person name="Ishida S."/>
            <person name="Ono Y."/>
            <person name="Takiguchi S."/>
            <person name="Watanabe S."/>
            <person name="Yosida M."/>
            <person name="Hotuta T."/>
            <person name="Kusano J."/>
            <person name="Kanehori K."/>
            <person name="Takahashi-Fujii A."/>
            <person name="Hara H."/>
            <person name="Tanase T.-O."/>
            <person name="Nomura Y."/>
            <person name="Togiya S."/>
            <person name="Komai F."/>
            <person name="Hara R."/>
            <person name="Takeuchi K."/>
            <person name="Arita M."/>
            <person name="Imose N."/>
            <person name="Musashino K."/>
            <person name="Yuuki H."/>
            <person name="Oshima A."/>
            <person name="Sasaki N."/>
            <person name="Aotsuka S."/>
            <person name="Yoshikawa Y."/>
            <person name="Matsunawa H."/>
            <person name="Ichihara T."/>
            <person name="Shiohata N."/>
            <person name="Sano S."/>
            <person name="Moriya S."/>
            <person name="Momiyama H."/>
            <person name="Satoh N."/>
            <person name="Takami S."/>
            <person name="Terashima Y."/>
            <person name="Suzuki O."/>
            <person name="Nakagawa S."/>
            <person name="Senoh A."/>
            <person name="Mizoguchi H."/>
            <person name="Goto Y."/>
            <person name="Shimizu F."/>
            <person name="Wakebe H."/>
            <person name="Hishigaki H."/>
            <person name="Watanabe T."/>
            <person name="Sugiyama A."/>
            <person name="Takemoto M."/>
            <person name="Kawakami B."/>
            <person name="Yamazaki M."/>
            <person name="Watanabe K."/>
            <person name="Kumagai A."/>
            <person name="Itakura S."/>
            <person name="Fukuzumi Y."/>
            <person name="Fujimori Y."/>
            <person name="Komiyama M."/>
            <person name="Tashiro H."/>
            <person name="Tanigami A."/>
            <person name="Fujiwara T."/>
            <person name="Ono T."/>
            <person name="Yamada K."/>
            <person name="Fujii Y."/>
            <person name="Ozaki K."/>
            <person name="Hirao M."/>
            <person name="Ohmori Y."/>
            <person name="Kawabata A."/>
            <person name="Hikiji T."/>
            <person name="Kobatake N."/>
            <person name="Inagaki H."/>
            <person name="Ikema Y."/>
            <person name="Okamoto S."/>
            <person name="Okitani R."/>
            <person name="Kawakami T."/>
            <person name="Noguchi S."/>
            <person name="Itoh T."/>
            <person name="Shigeta K."/>
            <person name="Senba T."/>
            <person name="Matsumura K."/>
            <person name="Nakajima Y."/>
            <person name="Mizuno T."/>
            <person name="Morinaga M."/>
            <person name="Sasaki M."/>
            <person name="Togashi T."/>
            <person name="Oyama M."/>
            <person name="Hata H."/>
            <person name="Watanabe M."/>
            <person name="Komatsu T."/>
            <person name="Mizushima-Sugano J."/>
            <person name="Satoh T."/>
            <person name="Shirai Y."/>
            <person name="Takahashi Y."/>
            <person name="Nakagawa K."/>
            <person name="Okumura K."/>
            <person name="Nagase T."/>
            <person name="Nomura N."/>
            <person name="Kikuchi H."/>
            <person name="Masuho Y."/>
            <person name="Yamashita R."/>
            <person name="Nakai K."/>
            <person name="Yada T."/>
            <person name="Nakamura Y."/>
            <person name="Ohara O."/>
            <person name="Isogai T."/>
            <person name="Sugano S."/>
        </authorList>
    </citation>
    <scope>NUCLEOTIDE SEQUENCE [LARGE SCALE MRNA] OF 227-841 (ISOFORM 2)</scope>
    <source>
        <tissue>Ovarian carcinoma</tissue>
    </source>
</reference>
<reference key="6">
    <citation type="journal article" date="2006" name="J. Dermatol. Sci.">
        <title>HAN11 binds mDia1 and controls GLI1 transcriptional activity.</title>
        <authorList>
            <person name="Morita K."/>
            <person name="Lo Celso C."/>
            <person name="Spencer-Dene B."/>
            <person name="Zouboulis C.C."/>
            <person name="Watt F.M."/>
        </authorList>
    </citation>
    <scope>PROTEIN SEQUENCE OF 560-580 AND 855-869</scope>
    <scope>INTERACTION WITH DCAF7</scope>
</reference>
<reference key="7">
    <citation type="journal article" date="1995" name="EMBO J.">
        <title>The proline-rich focal adhesion and microfilament protein VASP is a ligand for profilins.</title>
        <authorList>
            <person name="Reinhard M."/>
            <person name="Giehl K."/>
            <person name="Abel K."/>
            <person name="Haffner C."/>
            <person name="Jarchau T."/>
            <person name="Hoppe V."/>
            <person name="Jockusch B.M."/>
            <person name="Walter U."/>
        </authorList>
    </citation>
    <scope>PROTEIN SEQUENCE OF 742-801 AND 1145-1169</scope>
    <source>
        <tissue>Platelet</tissue>
    </source>
</reference>
<reference key="8">
    <citation type="journal article" date="2008" name="Proc. Natl. Acad. Sci. U.S.A.">
        <title>A quantitative atlas of mitotic phosphorylation.</title>
        <authorList>
            <person name="Dephoure N."/>
            <person name="Zhou C."/>
            <person name="Villen J."/>
            <person name="Beausoleil S.A."/>
            <person name="Bakalarski C.E."/>
            <person name="Elledge S.J."/>
            <person name="Gygi S.P."/>
        </authorList>
    </citation>
    <scope>PHOSPHORYLATION [LARGE SCALE ANALYSIS] AT SER-22</scope>
    <scope>IDENTIFICATION BY MASS SPECTROMETRY [LARGE SCALE ANALYSIS]</scope>
    <source>
        <tissue>Cervix carcinoma</tissue>
    </source>
</reference>
<reference key="9">
    <citation type="journal article" date="2009" name="Sci. Signal.">
        <title>Quantitative phosphoproteomic analysis of T cell receptor signaling reveals system-wide modulation of protein-protein interactions.</title>
        <authorList>
            <person name="Mayya V."/>
            <person name="Lundgren D.H."/>
            <person name="Hwang S.-I."/>
            <person name="Rezaul K."/>
            <person name="Wu L."/>
            <person name="Eng J.K."/>
            <person name="Rodionov V."/>
            <person name="Han D.K."/>
        </authorList>
    </citation>
    <scope>PHOSPHORYLATION [LARGE SCALE ANALYSIS] AT SER-22</scope>
    <scope>IDENTIFICATION BY MASS SPECTROMETRY [LARGE SCALE ANALYSIS]</scope>
    <source>
        <tissue>Leukemic T-cell</tissue>
    </source>
</reference>
<reference key="10">
    <citation type="journal article" date="2009" name="Science">
        <title>Lysine acetylation targets protein complexes and co-regulates major cellular functions.</title>
        <authorList>
            <person name="Choudhary C."/>
            <person name="Kumar C."/>
            <person name="Gnad F."/>
            <person name="Nielsen M.L."/>
            <person name="Rehman M."/>
            <person name="Walther T.C."/>
            <person name="Olsen J.V."/>
            <person name="Mann M."/>
        </authorList>
    </citation>
    <scope>ACETYLATION [LARGE SCALE ANALYSIS] AT LYS-1057 AND LYS-1103</scope>
    <scope>IDENTIFICATION BY MASS SPECTROMETRY [LARGE SCALE ANALYSIS]</scope>
</reference>
<reference key="11">
    <citation type="journal article" date="2010" name="Proc. Natl. Acad. Sci. U.S.A.">
        <title>ErbB2 receptor controls microtubule capture by recruiting ACF7 to the plasma membrane of migrating cells.</title>
        <authorList>
            <person name="Zaoui K."/>
            <person name="Benseddik K."/>
            <person name="Daou P."/>
            <person name="Salaun D."/>
            <person name="Badache A."/>
        </authorList>
    </citation>
    <scope>FUNCTION</scope>
</reference>
<reference key="12">
    <citation type="journal article" date="2010" name="Sci. Signal.">
        <title>Quantitative phosphoproteomics reveals widespread full phosphorylation site occupancy during mitosis.</title>
        <authorList>
            <person name="Olsen J.V."/>
            <person name="Vermeulen M."/>
            <person name="Santamaria A."/>
            <person name="Kumar C."/>
            <person name="Miller M.L."/>
            <person name="Jensen L.J."/>
            <person name="Gnad F."/>
            <person name="Cox J."/>
            <person name="Jensen T.S."/>
            <person name="Nigg E.A."/>
            <person name="Brunak S."/>
            <person name="Mann M."/>
        </authorList>
    </citation>
    <scope>PHOSPHORYLATION [LARGE SCALE ANALYSIS] AT SER-22</scope>
    <scope>IDENTIFICATION BY MASS SPECTROMETRY [LARGE SCALE ANALYSIS]</scope>
    <source>
        <tissue>Cervix carcinoma</tissue>
    </source>
</reference>
<reference key="13">
    <citation type="journal article" date="2011" name="BMC Biol.">
        <title>Identification and characterization of a set of conserved and new regulators of cytoskeletal organisation, cell morphology and migration.</title>
        <authorList>
            <person name="Bai S.W."/>
            <person name="Herrera-Abreu M.T."/>
            <person name="Rohn J.L."/>
            <person name="Racine V."/>
            <person name="Tajadura V."/>
            <person name="Suryavanshi N."/>
            <person name="Bechtel S."/>
            <person name="Wiemann S."/>
            <person name="Baum B."/>
            <person name="Ridley A.J."/>
        </authorList>
    </citation>
    <scope>FUNCTION</scope>
</reference>
<reference key="14">
    <citation type="journal article" date="2011" name="BMC Syst. Biol.">
        <title>Initial characterization of the human central proteome.</title>
        <authorList>
            <person name="Burkard T.R."/>
            <person name="Planyavsky M."/>
            <person name="Kaupe I."/>
            <person name="Breitwieser F.P."/>
            <person name="Buerckstuemmer T."/>
            <person name="Bennett K.L."/>
            <person name="Superti-Furga G."/>
            <person name="Colinge J."/>
        </authorList>
    </citation>
    <scope>IDENTIFICATION BY MASS SPECTROMETRY [LARGE SCALE ANALYSIS]</scope>
</reference>
<reference key="15">
    <citation type="journal article" date="2012" name="Mol. Cell. Proteomics">
        <title>Comparative large-scale characterisation of plant vs. mammal proteins reveals similar and idiosyncratic N-alpha acetylation features.</title>
        <authorList>
            <person name="Bienvenut W.V."/>
            <person name="Sumpton D."/>
            <person name="Martinez A."/>
            <person name="Lilla S."/>
            <person name="Espagne C."/>
            <person name="Meinnel T."/>
            <person name="Giglione C."/>
        </authorList>
    </citation>
    <scope>ACETYLATION [LARGE SCALE ANALYSIS] AT MET-1</scope>
    <scope>IDENTIFICATION BY MASS SPECTROMETRY [LARGE SCALE ANALYSIS]</scope>
</reference>
<reference key="16">
    <citation type="journal article" date="2012" name="Proc. Natl. Acad. Sci. U.S.A.">
        <title>N-terminal acetylome analyses and functional insights of the N-terminal acetyltransferase NatB.</title>
        <authorList>
            <person name="Van Damme P."/>
            <person name="Lasa M."/>
            <person name="Polevoda B."/>
            <person name="Gazquez C."/>
            <person name="Elosegui-Artola A."/>
            <person name="Kim D.S."/>
            <person name="De Juan-Pardo E."/>
            <person name="Demeyer K."/>
            <person name="Hole K."/>
            <person name="Larrea E."/>
            <person name="Timmerman E."/>
            <person name="Prieto J."/>
            <person name="Arnesen T."/>
            <person name="Sherman F."/>
            <person name="Gevaert K."/>
            <person name="Aldabe R."/>
        </authorList>
    </citation>
    <scope>ACETYLATION [LARGE SCALE ANALYSIS] AT MET-1</scope>
    <scope>IDENTIFICATION BY MASS SPECTROMETRY [LARGE SCALE ANALYSIS]</scope>
</reference>
<reference key="17">
    <citation type="journal article" date="2013" name="J. Proteome Res.">
        <title>Toward a comprehensive characterization of a human cancer cell phosphoproteome.</title>
        <authorList>
            <person name="Zhou H."/>
            <person name="Di Palma S."/>
            <person name="Preisinger C."/>
            <person name="Peng M."/>
            <person name="Polat A.N."/>
            <person name="Heck A.J."/>
            <person name="Mohammed S."/>
        </authorList>
    </citation>
    <scope>PHOSPHORYLATION [LARGE SCALE ANALYSIS] AT SER-7; SER-22; SER-36; SER-1251 AND SER-1254</scope>
    <scope>IDENTIFICATION BY MASS SPECTROMETRY [LARGE SCALE ANALYSIS]</scope>
    <source>
        <tissue>Cervix carcinoma</tissue>
        <tissue>Erythroleukemia</tissue>
    </source>
</reference>
<reference key="18">
    <citation type="journal article" date="2013" name="Mol. Biol. Cell">
        <title>cAMP-stimulated phosphorylation of diaphanous 1 regulates protein stability and interaction with binding partners in adrenocortical cells.</title>
        <authorList>
            <person name="Li D."/>
            <person name="Dammer E.B."/>
            <person name="Lucki N.C."/>
            <person name="Sewer M.B."/>
        </authorList>
    </citation>
    <scope>INTERACTION WITH RHOA; OSBPL2; OSBPL10; VIM; TUBB AND DYN1</scope>
    <scope>IDENTIFICATION BY MASS SPECTROMETRY</scope>
    <scope>PHOSPHORYLATION AT THR-768</scope>
    <scope>MUTAGENESIS OF SER-154; THR-768; THR-1091 AND THR-1238</scope>
</reference>
<reference key="19">
    <citation type="journal article" date="2014" name="J. Proteomics">
        <title>An enzyme assisted RP-RPLC approach for in-depth analysis of human liver phosphoproteome.</title>
        <authorList>
            <person name="Bian Y."/>
            <person name="Song C."/>
            <person name="Cheng K."/>
            <person name="Dong M."/>
            <person name="Wang F."/>
            <person name="Huang J."/>
            <person name="Sun D."/>
            <person name="Wang L."/>
            <person name="Ye M."/>
            <person name="Zou H."/>
        </authorList>
    </citation>
    <scope>IDENTIFICATION BY MASS SPECTROMETRY [LARGE SCALE ANALYSIS]</scope>
    <source>
        <tissue>Liver</tissue>
    </source>
</reference>
<reference key="20">
    <citation type="journal article" date="2015" name="Proteomics">
        <title>N-terminome analysis of the human mitochondrial proteome.</title>
        <authorList>
            <person name="Vaca Jacome A.S."/>
            <person name="Rabilloud T."/>
            <person name="Schaeffer-Reiss C."/>
            <person name="Rompais M."/>
            <person name="Ayoub D."/>
            <person name="Lane L."/>
            <person name="Bairoch A."/>
            <person name="Van Dorsselaer A."/>
            <person name="Carapito C."/>
        </authorList>
    </citation>
    <scope>IDENTIFICATION BY MASS SPECTROMETRY [LARGE SCALE ANALYSIS]</scope>
</reference>
<reference key="21">
    <citation type="journal article" date="2016" name="Am. J. Med. Genet. A">
        <title>Novel loss-of-function variants in DIAPH1 associated with syndromic microcephaly, blindness, and early onset seizures.</title>
        <authorList>
            <person name="Al-Maawali A."/>
            <person name="Barry B.J."/>
            <person name="Rajab A."/>
            <person name="El-Quessny M."/>
            <person name="Seman A."/>
            <person name="Coury S.N."/>
            <person name="Barkovich A.J."/>
            <person name="Yang E."/>
            <person name="Walsh C.A."/>
            <person name="Mochida G.H."/>
            <person name="Stoler J.M."/>
        </authorList>
    </citation>
    <scope>INVOLVEMENT IN SCBMS</scope>
</reference>
<reference key="22">
    <citation type="journal article" date="2015" name="Eur. J. Hum. Genet.">
        <title>Homozygous loss of DIAPH1 is a novel cause of microcephaly in humans.</title>
        <authorList>
            <person name="Ercan-Sencicek A.G."/>
            <person name="Jambi S."/>
            <person name="Franjic D."/>
            <person name="Nishimura S."/>
            <person name="Li M."/>
            <person name="El-Fishawy P."/>
            <person name="Morgan T.M."/>
            <person name="Sanders S.J."/>
            <person name="Bilguvar K."/>
            <person name="Suri M."/>
            <person name="Johnson M.H."/>
            <person name="Gupta A.R."/>
            <person name="Yuksel Z."/>
            <person name="Mane S."/>
            <person name="Grigorenko E."/>
            <person name="Picciotto M."/>
            <person name="Alberts A.S."/>
            <person name="Gunel M."/>
            <person name="Sestan N."/>
            <person name="State M.W."/>
        </authorList>
    </citation>
    <scope>FUNCTION</scope>
    <scope>INVOLVEMENT IN SCBMS</scope>
    <scope>DEVELOPMENTAL STAGE</scope>
    <scope>SUBCELLULAR LOCATION</scope>
</reference>
<reference key="23">
    <citation type="journal article" date="2016" name="Blood">
        <title>A gain-of-function variant in DIAPH1 causes dominant macrothrombocytopenia and hearing loss.</title>
        <authorList>
            <consortium name="BRIDGE-BPD Consortium"/>
            <person name="Stritt S."/>
            <person name="Nurden P."/>
            <person name="Turro E."/>
            <person name="Greene D."/>
            <person name="Jansen S.B."/>
            <person name="Westbury S.K."/>
            <person name="Petersen R."/>
            <person name="Astle W.J."/>
            <person name="Marlin S."/>
            <person name="Bariana T.K."/>
            <person name="Kostadima M."/>
            <person name="Lentaigne C."/>
            <person name="Maiwald S."/>
            <person name="Papadia S."/>
            <person name="Kelly A.M."/>
            <person name="Stephens J.C."/>
            <person name="Penkett C.J."/>
            <person name="Ashford S."/>
            <person name="Tuna S."/>
            <person name="Austin S."/>
            <person name="Bakchoul T."/>
            <person name="Collins P."/>
            <person name="Favier R."/>
            <person name="Lambert M.P."/>
            <person name="Mathias M."/>
            <person name="Millar C.M."/>
            <person name="Mapeta R."/>
            <person name="Perry D.J."/>
            <person name="Schulman S."/>
            <person name="Simeoni I."/>
            <person name="Thys C."/>
            <person name="Gomez K."/>
            <person name="Erber W.N."/>
            <person name="Stirrups K."/>
            <person name="Rendon A."/>
            <person name="Bradley J.R."/>
            <person name="van Geet C."/>
            <person name="Raymond F.L."/>
            <person name="Laffan M.A."/>
            <person name="Nurden A.T."/>
            <person name="Nieswandt B."/>
            <person name="Richardson S."/>
            <person name="Freson K."/>
            <person name="Ouwehand W.H."/>
            <person name="Mumford A.D."/>
        </authorList>
    </citation>
    <scope>FUNCTION</scope>
    <scope>TISSUE SPECIFICITY</scope>
    <scope>INVOLVEMENT IN DFNA1</scope>
    <scope>VARIANT DFNA1 1213-ARG--SER-1272 DEL</scope>
    <scope>CHARACTERIZATION OF VARIANT DFNA1 1213-ARG--SER-1272 DEL</scope>
</reference>
<reference key="24">
    <citation type="journal article" date="2017" name="Clin. Genet.">
        <title>Extension of the clinical and molecular phenotype of DIAPH1-associated autosomal dominant hearing loss (DFNA1).</title>
        <authorList>
            <person name="Neuhaus C."/>
            <person name="Lang-Roth R."/>
            <person name="Zimmermann U."/>
            <person name="Heller R."/>
            <person name="Eisenberger T."/>
            <person name="Weikert M."/>
            <person name="Markus S."/>
            <person name="Knipper M."/>
            <person name="Bolz H.J."/>
        </authorList>
    </citation>
    <scope>INVOLVEMENT IN DFNA1</scope>
    <scope>VARIANT DFNA1 1213-ARG--SER-1272 DEL</scope>
</reference>
<reference key="25">
    <citation type="journal article" date="2012" name="Orphanet J. Rare Dis.">
        <title>Targeted massive parallel sequencing: the effective detection of novel causative mutations associated with hearing loss in small families.</title>
        <authorList>
            <person name="Baek J.I."/>
            <person name="Oh S.K."/>
            <person name="Kim D.B."/>
            <person name="Choi S.Y."/>
            <person name="Kim U.K."/>
            <person name="Lee K.Y."/>
            <person name="Lee S.H."/>
        </authorList>
    </citation>
    <scope>VARIANT DFNA1 SER-678</scope>
</reference>
<name>DIAP1_HUMAN</name>
<keyword id="KW-0002">3D-structure</keyword>
<keyword id="KW-0007">Acetylation</keyword>
<keyword id="KW-0009">Actin-binding</keyword>
<keyword id="KW-0025">Alternative splicing</keyword>
<keyword id="KW-1003">Cell membrane</keyword>
<keyword id="KW-0966">Cell projection</keyword>
<keyword id="KW-0175">Coiled coil</keyword>
<keyword id="KW-0963">Cytoplasm</keyword>
<keyword id="KW-0206">Cytoskeleton</keyword>
<keyword id="KW-0209">Deafness</keyword>
<keyword id="KW-0903">Direct protein sequencing</keyword>
<keyword id="KW-0225">Disease variant</keyword>
<keyword id="KW-0887">Epilepsy</keyword>
<keyword id="KW-1009">Hearing</keyword>
<keyword id="KW-0472">Membrane</keyword>
<keyword id="KW-1010">Non-syndromic deafness</keyword>
<keyword id="KW-0539">Nucleus</keyword>
<keyword id="KW-0597">Phosphoprotein</keyword>
<keyword id="KW-1267">Proteomics identification</keyword>
<keyword id="KW-1185">Reference proteome</keyword>
<keyword id="KW-0677">Repeat</keyword>
<sequence length="1272" mass="141347">MEPPGGSLGPGRGTRDKKKGRSPDELPSAGGDGGKSKKFTLKRLMADELERFTSMRIKKEKEKPNSAHRNSSASYGDDPTAQSLQDVSDEQVLVLFEQMLLDMNLNEEKQQPLREKDIIIKREMVSQYLYTSKAGMSQKESSKSAMMYIQELRSGLRDMPLLSCLESLRVSLNNNPVSWVQTFGAEGLASLLDILKRLHDEKEETAGSYDSRNKHEIIRCLKAFMNNKFGIKTMLETEEGILLLVRAMDPAVPNMMIDAAKLLSALCILPQPEDMNERVLEAMTERAEMDEVERFQPLLDGLKSGTTIALKVGCLQLINALITPAEELDFRVHIRSELMRLGLHQVLQDLREIENEDMRVQLNVFDEQGEEDSYDLKGRLDDIRMEMDDFNEVFQILLNTVKDSKAEPHFLSILQHLLLVRNDYEARPQYYKLIEECISQIVLHKNGADPDFKCRHLQIEIEGLIDQMIDKTKVEKSEAKAAELEKKLDSELTARHELQVEMKKMESDFEQKLQDLQGEKDALHSEKQQIATEKQDLEAEVSQLTGEVAKLTKELEDAKKEMASLSAAAITVPPSVPSRAPVPPAPPLPGDSGTIIPPPPAPGDSTTPPPPPPPPPPPPPLPGGVCISSPPSLPGGTAISPPPPLSGDATIPPPPPLPEGVGIPSPSSLPGGTAIPPPPPLPGSARIPPPPPPLPGSAGIPPPPPPLPGEAGMPPPPPPLPGGPGIPPPPPFPGGPGIPPPPPGMGMPPPPPFGFGVPAAPVLPFGLTPKKLYKPEVQLRRPNWSKLVAEDLSQDCFWTKVKEDRFENNELFAKLTLTFSAQTKTSKAKKDQEGGEEKKSVQKKKVKELKVLDSKTAQNLSIFLGSFRMPYQEIKNVILEVNEAVLTESMIQNLIKQMPEPEQLKMLSELKDEYDDLAESEQFGVVMGTVPRLRPRLNAILFKLQFSEQVENIKPEIVSVTAACEELRKSESFSNLLEITLLVGNYMNAGSRNAGAFGFNISFLCKLRDTKSTDQKMTLLHFLAELCENDYPDVLKFPDELAHVEKASRVSAENLQKNLDQMKKQISDVERDVQNFPAATDEKDKFVEKMTSFVKDAQEQYNKLRMMHSNMETLYKELGEYFLFDPKKLSVEEFFMDLHNFRNMFLQAVKENQKRRETEEKMRRAKLAKEKAEKERLEKQQKREQLIDMNAEGDETGVMDSLLEALQSGAAFRRKRGPRQANRKAGCAVTSLLASELTKDDAMAAVPAKVSKNSETFPTILEEAKELVGRAS</sequence>
<evidence type="ECO:0000250" key="1">
    <source>
        <dbReference type="UniProtKB" id="O08808"/>
    </source>
</evidence>
<evidence type="ECO:0000255" key="2"/>
<evidence type="ECO:0000255" key="3">
    <source>
        <dbReference type="PROSITE-ProRule" id="PRU00577"/>
    </source>
</evidence>
<evidence type="ECO:0000255" key="4">
    <source>
        <dbReference type="PROSITE-ProRule" id="PRU00579"/>
    </source>
</evidence>
<evidence type="ECO:0000255" key="5">
    <source>
        <dbReference type="PROSITE-ProRule" id="PRU00774"/>
    </source>
</evidence>
<evidence type="ECO:0000256" key="6">
    <source>
        <dbReference type="SAM" id="MobiDB-lite"/>
    </source>
</evidence>
<evidence type="ECO:0000269" key="7">
    <source>
    </source>
</evidence>
<evidence type="ECO:0000269" key="8">
    <source>
    </source>
</evidence>
<evidence type="ECO:0000269" key="9">
    <source>
    </source>
</evidence>
<evidence type="ECO:0000269" key="10">
    <source>
    </source>
</evidence>
<evidence type="ECO:0000269" key="11">
    <source>
    </source>
</evidence>
<evidence type="ECO:0000269" key="12">
    <source>
    </source>
</evidence>
<evidence type="ECO:0000269" key="13">
    <source>
    </source>
</evidence>
<evidence type="ECO:0000269" key="14">
    <source>
    </source>
</evidence>
<evidence type="ECO:0000269" key="15">
    <source>
    </source>
</evidence>
<evidence type="ECO:0000303" key="16">
    <source>
    </source>
</evidence>
<evidence type="ECO:0000303" key="17">
    <source>
    </source>
</evidence>
<evidence type="ECO:0000303" key="18">
    <source>
    </source>
</evidence>
<evidence type="ECO:0000303" key="19">
    <source ref="2"/>
</evidence>
<evidence type="ECO:0000305" key="20"/>
<evidence type="ECO:0007744" key="21">
    <source>
    </source>
</evidence>
<evidence type="ECO:0007744" key="22">
    <source>
    </source>
</evidence>
<evidence type="ECO:0007744" key="23">
    <source>
    </source>
</evidence>
<evidence type="ECO:0007744" key="24">
    <source>
    </source>
</evidence>
<evidence type="ECO:0007744" key="25">
    <source>
    </source>
</evidence>
<evidence type="ECO:0007744" key="26">
    <source>
    </source>
</evidence>
<evidence type="ECO:0007744" key="27">
    <source>
    </source>
</evidence>
<evidence type="ECO:0007829" key="28">
    <source>
        <dbReference type="PDB" id="8FG1"/>
    </source>
</evidence>
<protein>
    <recommendedName>
        <fullName>Protein diaphanous homolog 1</fullName>
    </recommendedName>
    <alternativeName>
        <fullName>Diaphanous-related formin-1</fullName>
        <shortName>DRF1</shortName>
    </alternativeName>
</protein>
<proteinExistence type="evidence at protein level"/>
<dbReference type="EMBL" id="AF051782">
    <property type="protein sequence ID" value="AAC05373.1"/>
    <property type="molecule type" value="mRNA"/>
</dbReference>
<dbReference type="EMBL" id="AB209482">
    <property type="protein sequence ID" value="BAD92719.1"/>
    <property type="status" value="ALT_INIT"/>
    <property type="molecule type" value="mRNA"/>
</dbReference>
<dbReference type="EMBL" id="AC008781">
    <property type="status" value="NOT_ANNOTATED_CDS"/>
    <property type="molecule type" value="Genomic_DNA"/>
</dbReference>
<dbReference type="EMBL" id="BC117257">
    <property type="protein sequence ID" value="AAI17258.1"/>
    <property type="molecule type" value="mRNA"/>
</dbReference>
<dbReference type="EMBL" id="BC143413">
    <property type="protein sequence ID" value="AAI43414.1"/>
    <property type="molecule type" value="mRNA"/>
</dbReference>
<dbReference type="EMBL" id="AK023345">
    <property type="protein sequence ID" value="BAB14533.1"/>
    <property type="status" value="ALT_SEQ"/>
    <property type="molecule type" value="mRNA"/>
</dbReference>
<dbReference type="CCDS" id="CCDS43373.1">
    <molecule id="O60610-3"/>
</dbReference>
<dbReference type="CCDS" id="CCDS43374.1">
    <molecule id="O60610-1"/>
</dbReference>
<dbReference type="RefSeq" id="NP_001073280.1">
    <molecule id="O60610-3"/>
    <property type="nucleotide sequence ID" value="NM_001079812.3"/>
</dbReference>
<dbReference type="RefSeq" id="NP_005210.3">
    <molecule id="O60610-1"/>
    <property type="nucleotide sequence ID" value="NM_005219.4"/>
</dbReference>
<dbReference type="PDB" id="8FG1">
    <property type="method" value="NMR"/>
    <property type="chains" value="A=142-380, B=1194-1222"/>
</dbReference>
<dbReference type="PDBsum" id="8FG1"/>
<dbReference type="SMR" id="O60610"/>
<dbReference type="BioGRID" id="108073">
    <property type="interactions" value="156"/>
</dbReference>
<dbReference type="CORUM" id="O60610"/>
<dbReference type="FunCoup" id="O60610">
    <property type="interactions" value="1662"/>
</dbReference>
<dbReference type="IntAct" id="O60610">
    <property type="interactions" value="56"/>
</dbReference>
<dbReference type="MINT" id="O60610"/>
<dbReference type="STRING" id="9606.ENSP00000373706"/>
<dbReference type="ChEMBL" id="CHEMBL4295668"/>
<dbReference type="GlyCosmos" id="O60610">
    <property type="glycosylation" value="2 sites, 1 glycan"/>
</dbReference>
<dbReference type="GlyGen" id="O60610">
    <property type="glycosylation" value="6 sites, 1 N-linked glycan (1 site), 1 O-linked glycan (5 sites)"/>
</dbReference>
<dbReference type="iPTMnet" id="O60610"/>
<dbReference type="MetOSite" id="O60610"/>
<dbReference type="PhosphoSitePlus" id="O60610"/>
<dbReference type="SwissPalm" id="O60610"/>
<dbReference type="BioMuta" id="DIAPH1"/>
<dbReference type="OGP" id="O60610"/>
<dbReference type="jPOST" id="O60610"/>
<dbReference type="MassIVE" id="O60610"/>
<dbReference type="PaxDb" id="9606-ENSP00000381565"/>
<dbReference type="PeptideAtlas" id="O60610"/>
<dbReference type="ProteomicsDB" id="19987"/>
<dbReference type="ProteomicsDB" id="49484">
    <molecule id="O60610-1"/>
</dbReference>
<dbReference type="ProteomicsDB" id="49485">
    <molecule id="O60610-2"/>
</dbReference>
<dbReference type="Pumba" id="O60610"/>
<dbReference type="Antibodypedia" id="7674">
    <property type="antibodies" value="380 antibodies from 40 providers"/>
</dbReference>
<dbReference type="DNASU" id="1729"/>
<dbReference type="Ensembl" id="ENST00000389054.8">
    <molecule id="O60610-1"/>
    <property type="protein sequence ID" value="ENSP00000373706.4"/>
    <property type="gene ID" value="ENSG00000131504.18"/>
</dbReference>
<dbReference type="Ensembl" id="ENST00000518047.5">
    <molecule id="O60610-3"/>
    <property type="protein sequence ID" value="ENSP00000428268.2"/>
    <property type="gene ID" value="ENSG00000131504.18"/>
</dbReference>
<dbReference type="GeneID" id="1729"/>
<dbReference type="KEGG" id="hsa:1729"/>
<dbReference type="MANE-Select" id="ENST00000389054.8">
    <property type="protein sequence ID" value="ENSP00000373706.4"/>
    <property type="RefSeq nucleotide sequence ID" value="NM_005219.5"/>
    <property type="RefSeq protein sequence ID" value="NP_005210.3"/>
</dbReference>
<dbReference type="UCSC" id="uc063iba.1">
    <molecule id="O60610-1"/>
    <property type="organism name" value="human"/>
</dbReference>
<dbReference type="AGR" id="HGNC:2876"/>
<dbReference type="CTD" id="1729"/>
<dbReference type="DisGeNET" id="1729"/>
<dbReference type="GeneCards" id="DIAPH1"/>
<dbReference type="GeneReviews" id="DIAPH1"/>
<dbReference type="HGNC" id="HGNC:2876">
    <property type="gene designation" value="DIAPH1"/>
</dbReference>
<dbReference type="HPA" id="ENSG00000131504">
    <property type="expression patterns" value="Tissue enhanced (skeletal)"/>
</dbReference>
<dbReference type="MalaCards" id="DIAPH1"/>
<dbReference type="MIM" id="124900">
    <property type="type" value="phenotype"/>
</dbReference>
<dbReference type="MIM" id="602121">
    <property type="type" value="gene"/>
</dbReference>
<dbReference type="MIM" id="616632">
    <property type="type" value="phenotype"/>
</dbReference>
<dbReference type="neXtProt" id="NX_O60610"/>
<dbReference type="OpenTargets" id="ENSG00000131504"/>
<dbReference type="Orphanet" id="494444">
    <property type="disease" value="DIAPH1-related sensorineural hearing loss-thrombocytopenia syndrome"/>
</dbReference>
<dbReference type="Orphanet" id="2573">
    <property type="disease" value="Moyamoya disease"/>
</dbReference>
<dbReference type="Orphanet" id="477814">
    <property type="disease" value="Progressive microcephaly-seizures-cortical blindness-developmental delay syndrome"/>
</dbReference>
<dbReference type="PharmGKB" id="PA27333"/>
<dbReference type="VEuPathDB" id="HostDB:ENSG00000131504"/>
<dbReference type="eggNOG" id="KOG1924">
    <property type="taxonomic scope" value="Eukaryota"/>
</dbReference>
<dbReference type="GeneTree" id="ENSGT00940000159910"/>
<dbReference type="InParanoid" id="O60610"/>
<dbReference type="OMA" id="TPSIKMK"/>
<dbReference type="OrthoDB" id="1668162at2759"/>
<dbReference type="PAN-GO" id="O60610">
    <property type="GO annotations" value="2 GO annotations based on evolutionary models"/>
</dbReference>
<dbReference type="PhylomeDB" id="O60610"/>
<dbReference type="TreeFam" id="TF315383"/>
<dbReference type="PathwayCommons" id="O60610"/>
<dbReference type="Reactome" id="R-HSA-5663220">
    <property type="pathway name" value="RHO GTPases Activate Formins"/>
</dbReference>
<dbReference type="Reactome" id="R-HSA-6785631">
    <property type="pathway name" value="ERBB2 Regulates Cell Motility"/>
</dbReference>
<dbReference type="Reactome" id="R-HSA-6798695">
    <property type="pathway name" value="Neutrophil degranulation"/>
</dbReference>
<dbReference type="Reactome" id="R-HSA-8980692">
    <property type="pathway name" value="RHOA GTPase cycle"/>
</dbReference>
<dbReference type="Reactome" id="R-HSA-9013026">
    <property type="pathway name" value="RHOB GTPase cycle"/>
</dbReference>
<dbReference type="Reactome" id="R-HSA-9013106">
    <property type="pathway name" value="RHOC GTPase cycle"/>
</dbReference>
<dbReference type="Reactome" id="R-HSA-9013405">
    <property type="pathway name" value="RHOD GTPase cycle"/>
</dbReference>
<dbReference type="Reactome" id="R-HSA-9035034">
    <property type="pathway name" value="RHOF GTPase cycle"/>
</dbReference>
<dbReference type="Reactome" id="R-HSA-9854909">
    <property type="pathway name" value="Regulation of MITF-M dependent genes involved in invasion"/>
</dbReference>
<dbReference type="SignaLink" id="O60610"/>
<dbReference type="SIGNOR" id="O60610"/>
<dbReference type="BioGRID-ORCS" id="1729">
    <property type="hits" value="33 hits in 1156 CRISPR screens"/>
</dbReference>
<dbReference type="ChiTaRS" id="DIAPH1">
    <property type="organism name" value="human"/>
</dbReference>
<dbReference type="GeneWiki" id="DIAPH1"/>
<dbReference type="GenomeRNAi" id="1729"/>
<dbReference type="Pharos" id="O60610">
    <property type="development level" value="Tbio"/>
</dbReference>
<dbReference type="PRO" id="PR:O60610"/>
<dbReference type="Proteomes" id="UP000005640">
    <property type="component" value="Chromosome 5"/>
</dbReference>
<dbReference type="RNAct" id="O60610">
    <property type="molecule type" value="protein"/>
</dbReference>
<dbReference type="Bgee" id="ENSG00000131504">
    <property type="expression patterns" value="Expressed in granulocyte and 202 other cell types or tissues"/>
</dbReference>
<dbReference type="ExpressionAtlas" id="O60610">
    <property type="expression patterns" value="baseline and differential"/>
</dbReference>
<dbReference type="GO" id="GO:0005884">
    <property type="term" value="C:actin filament"/>
    <property type="evidence" value="ECO:0000318"/>
    <property type="project" value="GO_Central"/>
</dbReference>
<dbReference type="GO" id="GO:0005813">
    <property type="term" value="C:centrosome"/>
    <property type="evidence" value="ECO:0007669"/>
    <property type="project" value="UniProtKB-SubCell"/>
</dbReference>
<dbReference type="GO" id="GO:0005737">
    <property type="term" value="C:cytoplasm"/>
    <property type="evidence" value="ECO:0000250"/>
    <property type="project" value="UniProtKB"/>
</dbReference>
<dbReference type="GO" id="GO:0005829">
    <property type="term" value="C:cytosol"/>
    <property type="evidence" value="ECO:0000304"/>
    <property type="project" value="Reactome"/>
</dbReference>
<dbReference type="GO" id="GO:0101003">
    <property type="term" value="C:ficolin-1-rich granule membrane"/>
    <property type="evidence" value="ECO:0000304"/>
    <property type="project" value="Reactome"/>
</dbReference>
<dbReference type="GO" id="GO:0072686">
    <property type="term" value="C:mitotic spindle"/>
    <property type="evidence" value="ECO:0000314"/>
    <property type="project" value="BHF-UCL"/>
</dbReference>
<dbReference type="GO" id="GO:0005634">
    <property type="term" value="C:nucleus"/>
    <property type="evidence" value="ECO:0000250"/>
    <property type="project" value="UniProtKB"/>
</dbReference>
<dbReference type="GO" id="GO:0005886">
    <property type="term" value="C:plasma membrane"/>
    <property type="evidence" value="ECO:0000304"/>
    <property type="project" value="Reactome"/>
</dbReference>
<dbReference type="GO" id="GO:0032587">
    <property type="term" value="C:ruffle membrane"/>
    <property type="evidence" value="ECO:0007669"/>
    <property type="project" value="UniProtKB-SubCell"/>
</dbReference>
<dbReference type="GO" id="GO:0030667">
    <property type="term" value="C:secretory granule membrane"/>
    <property type="evidence" value="ECO:0000304"/>
    <property type="project" value="Reactome"/>
</dbReference>
<dbReference type="GO" id="GO:0003779">
    <property type="term" value="F:actin binding"/>
    <property type="evidence" value="ECO:0007669"/>
    <property type="project" value="UniProtKB-KW"/>
</dbReference>
<dbReference type="GO" id="GO:0003723">
    <property type="term" value="F:RNA binding"/>
    <property type="evidence" value="ECO:0007005"/>
    <property type="project" value="UniProtKB"/>
</dbReference>
<dbReference type="GO" id="GO:0005102">
    <property type="term" value="F:signaling receptor binding"/>
    <property type="evidence" value="ECO:0000303"/>
    <property type="project" value="ProtInc"/>
</dbReference>
<dbReference type="GO" id="GO:0031267">
    <property type="term" value="F:small GTPase binding"/>
    <property type="evidence" value="ECO:0007669"/>
    <property type="project" value="InterPro"/>
</dbReference>
<dbReference type="GO" id="GO:0044325">
    <property type="term" value="F:transmembrane transporter binding"/>
    <property type="evidence" value="ECO:0000353"/>
    <property type="project" value="BHF-UCL"/>
</dbReference>
<dbReference type="GO" id="GO:0030036">
    <property type="term" value="P:actin cytoskeleton organization"/>
    <property type="evidence" value="ECO:0000250"/>
    <property type="project" value="UniProtKB"/>
</dbReference>
<dbReference type="GO" id="GO:0030041">
    <property type="term" value="P:actin filament polymerization"/>
    <property type="evidence" value="ECO:0000250"/>
    <property type="project" value="UniProtKB"/>
</dbReference>
<dbReference type="GO" id="GO:0071420">
    <property type="term" value="P:cellular response to histamine"/>
    <property type="evidence" value="ECO:0000315"/>
    <property type="project" value="BHF-UCL"/>
</dbReference>
<dbReference type="GO" id="GO:0007010">
    <property type="term" value="P:cytoskeleton organization"/>
    <property type="evidence" value="ECO:0000315"/>
    <property type="project" value="UniProtKB"/>
</dbReference>
<dbReference type="GO" id="GO:0035372">
    <property type="term" value="P:protein localization to microtubule"/>
    <property type="evidence" value="ECO:0000315"/>
    <property type="project" value="BHF-UCL"/>
</dbReference>
<dbReference type="GO" id="GO:0008360">
    <property type="term" value="P:regulation of cell shape"/>
    <property type="evidence" value="ECO:0000315"/>
    <property type="project" value="UniProtKB"/>
</dbReference>
<dbReference type="GO" id="GO:0051493">
    <property type="term" value="P:regulation of cytoskeleton organization"/>
    <property type="evidence" value="ECO:0000315"/>
    <property type="project" value="UniProtKB"/>
</dbReference>
<dbReference type="GO" id="GO:0032886">
    <property type="term" value="P:regulation of microtubule-based process"/>
    <property type="evidence" value="ECO:0000315"/>
    <property type="project" value="UniProtKB"/>
</dbReference>
<dbReference type="GO" id="GO:0051279">
    <property type="term" value="P:regulation of release of sequestered calcium ion into cytosol"/>
    <property type="evidence" value="ECO:0000315"/>
    <property type="project" value="BHF-UCL"/>
</dbReference>
<dbReference type="GO" id="GO:0007605">
    <property type="term" value="P:sensory perception of sound"/>
    <property type="evidence" value="ECO:0000304"/>
    <property type="project" value="ProtInc"/>
</dbReference>
<dbReference type="FunFam" id="1.25.10.10:FF:000109">
    <property type="entry name" value="Diaphanous homolog 1 (Drosophila)"/>
    <property type="match status" value="1"/>
</dbReference>
<dbReference type="FunFam" id="1.20.58.630:FF:000001">
    <property type="entry name" value="Diaphanous related formin 1"/>
    <property type="match status" value="1"/>
</dbReference>
<dbReference type="FunFam" id="1.20.58.2220:FF:000003">
    <property type="entry name" value="protein diaphanous homolog 1 isoform X2"/>
    <property type="match status" value="1"/>
</dbReference>
<dbReference type="FunFam" id="1.10.238.150:FF:000002">
    <property type="entry name" value="protein diaphanous homolog 2 isoform X2"/>
    <property type="match status" value="1"/>
</dbReference>
<dbReference type="Gene3D" id="1.20.58.630">
    <property type="match status" value="1"/>
</dbReference>
<dbReference type="Gene3D" id="6.10.30.30">
    <property type="match status" value="1"/>
</dbReference>
<dbReference type="Gene3D" id="1.10.20.40">
    <property type="entry name" value="Formin, diaphanous GTPase-binding domain"/>
    <property type="match status" value="1"/>
</dbReference>
<dbReference type="Gene3D" id="1.20.58.2220">
    <property type="entry name" value="Formin, FH2 domain"/>
    <property type="match status" value="1"/>
</dbReference>
<dbReference type="Gene3D" id="1.10.238.150">
    <property type="entry name" value="Formin, FH3 diaphanous domain"/>
    <property type="match status" value="1"/>
</dbReference>
<dbReference type="Gene3D" id="1.25.10.10">
    <property type="entry name" value="Leucine-rich Repeat Variant"/>
    <property type="match status" value="1"/>
</dbReference>
<dbReference type="InterPro" id="IPR011989">
    <property type="entry name" value="ARM-like"/>
</dbReference>
<dbReference type="InterPro" id="IPR016024">
    <property type="entry name" value="ARM-type_fold"/>
</dbReference>
<dbReference type="InterPro" id="IPR014767">
    <property type="entry name" value="DAD_dom"/>
</dbReference>
<dbReference type="InterPro" id="IPR044933">
    <property type="entry name" value="DIA_GBD_sf"/>
</dbReference>
<dbReference type="InterPro" id="IPR010465">
    <property type="entry name" value="Drf_DAD"/>
</dbReference>
<dbReference type="InterPro" id="IPR015425">
    <property type="entry name" value="FH2_Formin"/>
</dbReference>
<dbReference type="InterPro" id="IPR042201">
    <property type="entry name" value="FH2_Formin_sf"/>
</dbReference>
<dbReference type="InterPro" id="IPR010472">
    <property type="entry name" value="FH3_dom"/>
</dbReference>
<dbReference type="InterPro" id="IPR051412">
    <property type="entry name" value="Formin_Homology_Diaphanous_sf"/>
</dbReference>
<dbReference type="InterPro" id="IPR014768">
    <property type="entry name" value="GBD/FH3_dom"/>
</dbReference>
<dbReference type="InterPro" id="IPR010473">
    <property type="entry name" value="GTPase-bd"/>
</dbReference>
<dbReference type="PANTHER" id="PTHR45691">
    <property type="entry name" value="PROTEIN DIAPHANOUS"/>
    <property type="match status" value="1"/>
</dbReference>
<dbReference type="PANTHER" id="PTHR45691:SF4">
    <property type="entry name" value="PROTEIN DIAPHANOUS HOMOLOG 1"/>
    <property type="match status" value="1"/>
</dbReference>
<dbReference type="Pfam" id="PF06345">
    <property type="entry name" value="Drf_DAD"/>
    <property type="match status" value="1"/>
</dbReference>
<dbReference type="Pfam" id="PF06346">
    <property type="entry name" value="Drf_FH1"/>
    <property type="match status" value="2"/>
</dbReference>
<dbReference type="Pfam" id="PF06367">
    <property type="entry name" value="Drf_FH3"/>
    <property type="match status" value="1"/>
</dbReference>
<dbReference type="Pfam" id="PF06371">
    <property type="entry name" value="Drf_GBD"/>
    <property type="match status" value="1"/>
</dbReference>
<dbReference type="Pfam" id="PF02181">
    <property type="entry name" value="FH2"/>
    <property type="match status" value="1"/>
</dbReference>
<dbReference type="SMART" id="SM01139">
    <property type="entry name" value="Drf_FH3"/>
    <property type="match status" value="1"/>
</dbReference>
<dbReference type="SMART" id="SM01140">
    <property type="entry name" value="Drf_GBD"/>
    <property type="match status" value="1"/>
</dbReference>
<dbReference type="SMART" id="SM00498">
    <property type="entry name" value="FH2"/>
    <property type="match status" value="1"/>
</dbReference>
<dbReference type="SUPFAM" id="SSF48371">
    <property type="entry name" value="ARM repeat"/>
    <property type="match status" value="1"/>
</dbReference>
<dbReference type="SUPFAM" id="SSF101447">
    <property type="entry name" value="Formin homology 2 domain (FH2 domain)"/>
    <property type="match status" value="1"/>
</dbReference>
<dbReference type="PROSITE" id="PS51231">
    <property type="entry name" value="DAD"/>
    <property type="match status" value="1"/>
</dbReference>
<dbReference type="PROSITE" id="PS51444">
    <property type="entry name" value="FH2"/>
    <property type="match status" value="1"/>
</dbReference>
<dbReference type="PROSITE" id="PS51232">
    <property type="entry name" value="GBD_FH3"/>
    <property type="match status" value="1"/>
</dbReference>
<comment type="function">
    <text evidence="1 7 8 11 13">Actin nucleation and elongation factor required for the assembly of F-actin structures, such as actin cables and stress fibers (By similarity). Binds to the barbed end of the actin filament and slows down actin polymerization and depolymerization (By similarity). Required for cytokinesis, and transcriptional activation of the serum response factor (By similarity). DFR proteins couple Rho and Src tyrosine kinase during signaling and the regulation of actin dynamics (By similarity). Functions as a scaffold protein for MAPRE1 and APC to stabilize microtubules and promote cell migration (By similarity). Has neurite outgrowth promoting activity. Acts in a Rho-dependent manner to recruit PFY1 to the membrane (By similarity). In hear cells, it may play a role in the regulation of actin polymerization in hair cells (PubMed:20937854, PubMed:21834987, PubMed:26912466). The MEMO1-RHOA-DIAPH1 signaling pathway plays an important role in ERBB2-dependent stabilization of microtubules at the cell cortex (PubMed:20937854, PubMed:21834987). It controls the localization of APC and CLASP2 to the cell membrane, via the regulation of GSK3B activity (PubMed:20937854, PubMed:21834987). In turn, membrane-bound APC allows the localization of the MACF1 to the cell membrane, which is required for microtubule capture and stabilization (PubMed:20937854, PubMed:21834987). Plays a role in the regulation of cell morphology and cytoskeletal organization. Required in the control of cell shape (PubMed:20937854, PubMed:21834987). Plays a role in brain development (PubMed:24781755). Also acts as an actin nucleation and elongation factor in the nucleus by promoting nuclear actin polymerization inside the nucleus to drive serum-dependent SRF-MRTFA activity (By similarity).</text>
</comment>
<comment type="subunit">
    <text evidence="1 10">Homodimer (By similarity). Interacts with the GTP-bound form of RHOA (PubMed:23325789). Interacts with RHOC, PFY1, MAPRE1 and BAIAP2 (By similarity). Interacts with APC; acts as a scaffold protein for MAPRE1 and APC to stabilize microtubules and promote cell migration (By similarity). Interacts with SCAI (By similarity). Interacts with DCAF7, via FH2 domain (By similarity). Interacts with NCDN (By similarity). Interacts with OSBPL10, OSBPL2, VIM, TUBB and DYN1 (PubMed:23325789).</text>
</comment>
<comment type="interaction">
    <interactant intactId="EBI-3959709">
        <id>O60610</id>
    </interactant>
    <interactant intactId="EBI-1646426">
        <id>Q15109</id>
        <label>AGER</label>
    </interactant>
    <organismsDiffer>false</organismsDiffer>
    <experiments>3</experiments>
</comment>
<comment type="interaction">
    <interactant intactId="EBI-3959709">
        <id>O60610</id>
    </interactant>
    <interactant intactId="EBI-719945">
        <id>P49593</id>
        <label>PPM1F</label>
    </interactant>
    <organismsDiffer>false</organismsDiffer>
    <experiments>3</experiments>
</comment>
<comment type="interaction">
    <interactant intactId="EBI-3959709">
        <id>O60610</id>
    </interactant>
    <interactant intactId="EBI-446668">
        <id>P61586</id>
        <label>RHOA</label>
    </interactant>
    <organismsDiffer>false</organismsDiffer>
    <experiments>3</experiments>
</comment>
<comment type="interaction">
    <interactant intactId="EBI-3959709">
        <id>O60610</id>
    </interactant>
    <interactant intactId="EBI-747589">
        <id>P08134</id>
        <label>RHOC</label>
    </interactant>
    <organismsDiffer>false</organismsDiffer>
    <experiments>2</experiments>
</comment>
<comment type="interaction">
    <interactant intactId="EBI-3959709">
        <id>O60610</id>
    </interactant>
    <interactant intactId="EBI-3918631">
        <id>O00212</id>
        <label>RHOD</label>
    </interactant>
    <organismsDiffer>false</organismsDiffer>
    <experiments>2</experiments>
</comment>
<comment type="interaction">
    <interactant intactId="EBI-3959709">
        <id>O60610</id>
    </interactant>
    <interactant intactId="EBI-6248094">
        <id>Q9Q2G4</id>
        <label>ORF</label>
    </interactant>
    <organismsDiffer>true</organismsDiffer>
    <experiments>2</experiments>
</comment>
<comment type="subcellular location">
    <subcellularLocation>
        <location evidence="1">Cell membrane</location>
    </subcellularLocation>
    <subcellularLocation>
        <location evidence="1">Cell projection</location>
        <location evidence="1">Ruffle membrane</location>
    </subcellularLocation>
    <subcellularLocation>
        <location evidence="11">Cytoplasm</location>
        <location evidence="11">Cytoskeleton</location>
    </subcellularLocation>
    <subcellularLocation>
        <location evidence="11">Cytoplasm</location>
        <location evidence="11">Cytoskeleton</location>
        <location evidence="11">Microtubule organizing center</location>
        <location evidence="11">Centrosome</location>
    </subcellularLocation>
    <subcellularLocation>
        <location evidence="11">Cytoplasm</location>
        <location evidence="11">Cytoskeleton</location>
        <location evidence="11">Spindle</location>
    </subcellularLocation>
    <subcellularLocation>
        <location evidence="1">Cytoplasm</location>
    </subcellularLocation>
    <subcellularLocation>
        <location evidence="1">Nucleus</location>
    </subcellularLocation>
    <text evidence="1">Membrane ruffles, especially at the tip of ruffles, of motile cells.</text>
</comment>
<comment type="alternative products">
    <event type="alternative splicing"/>
    <isoform>
        <id>O60610-1</id>
        <name>1</name>
        <sequence type="displayed"/>
    </isoform>
    <isoform>
        <id>O60610-2</id>
        <name>2</name>
        <sequence type="described" ref="VSP_035870 VSP_035871 VSP_035872"/>
    </isoform>
    <isoform>
        <id>O60610-3</id>
        <name>3</name>
        <sequence type="described" ref="VSP_035870"/>
    </isoform>
</comment>
<comment type="tissue specificity">
    <text evidence="13">Expressed in brain, heart, placenta, lung, kidney, pancreas, liver, skeletal muscle and cochlea. Expressed in platelets (PubMed:26912466).</text>
</comment>
<comment type="developmental stage">
    <text evidence="11">Strongly expressed in ventricular and subventricular zone progenitor cells of the neocortical wall at 12 weeks post-conception.</text>
</comment>
<comment type="domain">
    <text evidence="1">The DAD domain regulates activation via by an autoinhibitory interaction with the GBD/FH3 domain (By similarity). This autoinhibition is released upon competitive binding of an activated GTPase (By similarity). The release of DAD allows the FH2 domain to then nucleate and elongate nonbranched actin filaments (By similarity).</text>
</comment>
<comment type="PTM">
    <text evidence="10">Phosphorylation at Thr-768 is stimulated by cAMP and regulates stability, complex formation and mitochondrial movement.</text>
</comment>
<comment type="disease" evidence="9 13 14 15">
    <disease id="DI-00831">
        <name>Deafness, autosomal dominant 1, with or without thrombocytopenia</name>
        <acronym>DFNA1</acronym>
        <description>A form of non-syndromic sensorineural hearing loss. Sensorineural deafness results from damage to the neural receptors of the inner ear, the nerve pathways to the brain, or the area of the brain that receives sound information. Patients may have mild thrombocytopenia and enlarged platelets, although most of DFNA1 affected individuals do not have significant bleeding tendencies.</description>
        <dbReference type="MIM" id="124900"/>
    </disease>
    <text>The disease is caused by variants affecting the gene represented in this entry.</text>
</comment>
<comment type="disease" evidence="11 12">
    <disease id="DI-04572">
        <name>Seizures, cortical blindness, and microcephaly syndrome</name>
        <acronym>SCBMS</acronym>
        <description>A severe autosomal recessive neurodevelopmental disorder characterized by microcephaly, early-onset seizures, severely delayed psychomotor development, short stature, and cortical blindness.</description>
        <dbReference type="MIM" id="616632"/>
    </disease>
    <text>The disease is caused by variants affecting the gene represented in this entry.</text>
</comment>
<comment type="similarity">
    <text evidence="20">Belongs to the formin homology family. Diaphanous subfamily.</text>
</comment>
<comment type="sequence caution" evidence="20">
    <conflict type="miscellaneous discrepancy">
        <sequence resource="EMBL-CDS" id="BAB14533"/>
    </conflict>
    <text>Intron retention.</text>
</comment>
<comment type="sequence caution" evidence="20">
    <conflict type="erroneous initiation">
        <sequence resource="EMBL-CDS" id="BAD92719"/>
    </conflict>
    <text>Extended N-terminus.</text>
</comment>
<comment type="online information" name="Hereditary hearing loss homepage">
    <link uri="https://hereditaryhearingloss.org/dominant"/>
    <text>Gene page</text>
</comment>
<feature type="chain" id="PRO_0000194893" description="Protein diaphanous homolog 1">
    <location>
        <begin position="1"/>
        <end position="1272"/>
    </location>
</feature>
<feature type="domain" description="GBD/FH3" evidence="4">
    <location>
        <begin position="84"/>
        <end position="449"/>
    </location>
</feature>
<feature type="domain" description="FH1">
    <location>
        <begin position="583"/>
        <end position="764"/>
    </location>
</feature>
<feature type="domain" description="FH2" evidence="5">
    <location>
        <begin position="769"/>
        <end position="1171"/>
    </location>
</feature>
<feature type="domain" description="DAD" evidence="3">
    <location>
        <begin position="1194"/>
        <end position="1222"/>
    </location>
</feature>
<feature type="region of interest" description="Disordered" evidence="6">
    <location>
        <begin position="1"/>
        <end position="84"/>
    </location>
</feature>
<feature type="region of interest" description="Disordered" evidence="6">
    <location>
        <begin position="573"/>
        <end position="755"/>
    </location>
</feature>
<feature type="coiled-coil region" evidence="2">
    <location>
        <begin position="468"/>
        <end position="572"/>
    </location>
</feature>
<feature type="coiled-coil region" evidence="2">
    <location>
        <begin position="1039"/>
        <end position="1196"/>
    </location>
</feature>
<feature type="compositionally biased region" description="Gly residues" evidence="6">
    <location>
        <begin position="1"/>
        <end position="12"/>
    </location>
</feature>
<feature type="compositionally biased region" description="Basic and acidic residues" evidence="6">
    <location>
        <begin position="44"/>
        <end position="65"/>
    </location>
</feature>
<feature type="compositionally biased region" description="Polar residues" evidence="6">
    <location>
        <begin position="67"/>
        <end position="84"/>
    </location>
</feature>
<feature type="compositionally biased region" description="Pro residues" evidence="6">
    <location>
        <begin position="574"/>
        <end position="589"/>
    </location>
</feature>
<feature type="compositionally biased region" description="Pro residues" evidence="6">
    <location>
        <begin position="596"/>
        <end position="622"/>
    </location>
</feature>
<feature type="compositionally biased region" description="Pro residues" evidence="6">
    <location>
        <begin position="640"/>
        <end position="658"/>
    </location>
</feature>
<feature type="compositionally biased region" description="Low complexity" evidence="6">
    <location>
        <begin position="659"/>
        <end position="674"/>
    </location>
</feature>
<feature type="compositionally biased region" description="Pro residues" evidence="6">
    <location>
        <begin position="675"/>
        <end position="753"/>
    </location>
</feature>
<feature type="modified residue" description="N-acetylmethionine" evidence="25 26">
    <location>
        <position position="1"/>
    </location>
</feature>
<feature type="modified residue" description="Phosphoserine" evidence="27">
    <location>
        <position position="7"/>
    </location>
</feature>
<feature type="modified residue" description="Phosphoserine" evidence="21 23 24 27">
    <location>
        <position position="22"/>
    </location>
</feature>
<feature type="modified residue" description="Phosphoserine" evidence="27">
    <location>
        <position position="36"/>
    </location>
</feature>
<feature type="modified residue" description="Phosphothreonine" evidence="10">
    <location>
        <position position="768"/>
    </location>
</feature>
<feature type="modified residue" description="N6-acetyllysine" evidence="22">
    <location>
        <position position="1057"/>
    </location>
</feature>
<feature type="modified residue" description="N6-acetyllysine" evidence="22">
    <location>
        <position position="1103"/>
    </location>
</feature>
<feature type="modified residue" description="Phosphotyrosine" evidence="1">
    <location>
        <position position="1121"/>
    </location>
</feature>
<feature type="modified residue" description="Phosphoserine" evidence="27">
    <location>
        <position position="1251"/>
    </location>
</feature>
<feature type="modified residue" description="Phosphoserine" evidence="27">
    <location>
        <position position="1254"/>
    </location>
</feature>
<feature type="splice variant" id="VSP_035870" description="In isoform 2 and isoform 3." evidence="16 17 18 19">
    <location>
        <begin position="40"/>
        <end position="48"/>
    </location>
</feature>
<feature type="splice variant" id="VSP_035871" description="In isoform 2." evidence="16 18 19">
    <location>
        <begin position="621"/>
        <end position="632"/>
    </location>
</feature>
<feature type="splice variant" id="VSP_035872" description="In isoform 2." evidence="16 18 19">
    <location>
        <begin position="826"/>
        <end position="828"/>
    </location>
</feature>
<feature type="sequence variant" id="VAR_079874" description="In DFNA1; dbSNP:rs186370335." evidence="9">
    <original>P</original>
    <variation>S</variation>
    <location>
        <position position="678"/>
    </location>
</feature>
<feature type="sequence variant" id="VAR_078862" description="In DFNA1; with thrombocytopenia; affects function in regulation of cytoskeleton organization." evidence="13 14">
    <location>
        <begin position="1213"/>
        <end position="1272"/>
    </location>
</feature>
<feature type="mutagenesis site" description="Partial decrease of phosphorylation." evidence="10">
    <original>S</original>
    <variation>A</variation>
    <location>
        <position position="154"/>
    </location>
</feature>
<feature type="mutagenesis site" description="Substantial loss of phosphorylation, no increase of phosphorylation in response to cAMP, increased stability, reduced interaction with OSBPL2 and OSBPL10 and reduced mitochondrial movement." evidence="10">
    <original>T</original>
    <variation>A</variation>
    <location>
        <position position="768"/>
    </location>
</feature>
<feature type="mutagenesis site" description="Substantial loss of phosphorylation." evidence="10">
    <original>T</original>
    <variation>A</variation>
    <location>
        <position position="1091"/>
    </location>
</feature>
<feature type="mutagenesis site" description="Substantial loss of phosphorylation." evidence="10">
    <original>T</original>
    <variation>A</variation>
    <location>
        <position position="1238"/>
    </location>
</feature>
<feature type="sequence conflict" description="In Ref. 1; AAC05373." evidence="20" ref="1">
    <original>G</original>
    <variation>E</variation>
    <location>
        <position position="13"/>
    </location>
</feature>
<feature type="sequence conflict" description="In Ref. 4; AAI17258." evidence="20" ref="4">
    <location>
        <position position="609"/>
    </location>
</feature>
<feature type="sequence conflict" description="In Ref. 7; AA sequence." evidence="20" ref="7">
    <original>R</original>
    <variation>A</variation>
    <location>
        <position position="1156"/>
    </location>
</feature>
<feature type="sequence conflict" description="In Ref. 1; AAC05373 and 7; AA sequence." evidence="20" ref="1 7">
    <original>E</original>
    <variation>K</variation>
    <location>
        <position position="1157"/>
    </location>
</feature>
<feature type="helix" evidence="28">
    <location>
        <begin position="145"/>
        <end position="152"/>
    </location>
</feature>
<feature type="turn" evidence="28">
    <location>
        <begin position="153"/>
        <end position="155"/>
    </location>
</feature>
<feature type="helix" evidence="28">
    <location>
        <begin position="158"/>
        <end position="174"/>
    </location>
</feature>
<feature type="helix" evidence="28">
    <location>
        <begin position="177"/>
        <end position="200"/>
    </location>
</feature>
<feature type="helix" evidence="28">
    <location>
        <begin position="203"/>
        <end position="205"/>
    </location>
</feature>
<feature type="helix" evidence="28">
    <location>
        <begin position="210"/>
        <end position="224"/>
    </location>
</feature>
<feature type="helix" evidence="28">
    <location>
        <begin position="228"/>
        <end position="235"/>
    </location>
</feature>
<feature type="helix" evidence="28">
    <location>
        <begin position="240"/>
        <end position="246"/>
    </location>
</feature>
<feature type="helix" evidence="28">
    <location>
        <begin position="253"/>
        <end position="267"/>
    </location>
</feature>
<feature type="turn" evidence="28">
    <location>
        <begin position="272"/>
        <end position="274"/>
    </location>
</feature>
<feature type="helix" evidence="28">
    <location>
        <begin position="275"/>
        <end position="289"/>
    </location>
</feature>
<feature type="helix" evidence="28">
    <location>
        <begin position="296"/>
        <end position="299"/>
    </location>
</feature>
<feature type="helix" evidence="28">
    <location>
        <begin position="308"/>
        <end position="322"/>
    </location>
</feature>
<feature type="helix" evidence="28">
    <location>
        <begin position="328"/>
        <end position="340"/>
    </location>
</feature>
<feature type="helix" evidence="28">
    <location>
        <begin position="343"/>
        <end position="350"/>
    </location>
</feature>
<feature type="helix" evidence="28">
    <location>
        <begin position="356"/>
        <end position="377"/>
    </location>
</feature>
<feature type="helix" evidence="28">
    <location>
        <begin position="1198"/>
        <end position="1207"/>
    </location>
</feature>
<feature type="helix" evidence="28">
    <location>
        <begin position="1210"/>
        <end position="1212"/>
    </location>
</feature>
<accession>O60610</accession>
<accession>A6NF18</accession>
<accession>B7ZKW2</accession>
<accession>E9PEZ2</accession>
<accession>Q17RN4</accession>
<accession>Q59FH8</accession>
<accession>Q9UC76</accession>
<organism>
    <name type="scientific">Homo sapiens</name>
    <name type="common">Human</name>
    <dbReference type="NCBI Taxonomy" id="9606"/>
    <lineage>
        <taxon>Eukaryota</taxon>
        <taxon>Metazoa</taxon>
        <taxon>Chordata</taxon>
        <taxon>Craniata</taxon>
        <taxon>Vertebrata</taxon>
        <taxon>Euteleostomi</taxon>
        <taxon>Mammalia</taxon>
        <taxon>Eutheria</taxon>
        <taxon>Euarchontoglires</taxon>
        <taxon>Primates</taxon>
        <taxon>Haplorrhini</taxon>
        <taxon>Catarrhini</taxon>
        <taxon>Hominidae</taxon>
        <taxon>Homo</taxon>
    </lineage>
</organism>
<gene>
    <name type="primary">DIAPH1</name>
    <name type="synonym">DIAP1</name>
</gene>